<feature type="chain" id="PRO_0000340327" description="DNA ligase">
    <location>
        <begin position="1"/>
        <end position="669"/>
    </location>
</feature>
<feature type="domain" description="BRCT" evidence="1">
    <location>
        <begin position="591"/>
        <end position="669"/>
    </location>
</feature>
<feature type="active site" description="N6-AMP-lysine intermediate" evidence="1">
    <location>
        <position position="116"/>
    </location>
</feature>
<feature type="binding site" evidence="1">
    <location>
        <begin position="34"/>
        <end position="38"/>
    </location>
    <ligand>
        <name>NAD(+)</name>
        <dbReference type="ChEBI" id="CHEBI:57540"/>
    </ligand>
</feature>
<feature type="binding site" evidence="1">
    <location>
        <begin position="83"/>
        <end position="84"/>
    </location>
    <ligand>
        <name>NAD(+)</name>
        <dbReference type="ChEBI" id="CHEBI:57540"/>
    </ligand>
</feature>
<feature type="binding site" evidence="1">
    <location>
        <position position="114"/>
    </location>
    <ligand>
        <name>NAD(+)</name>
        <dbReference type="ChEBI" id="CHEBI:57540"/>
    </ligand>
</feature>
<feature type="binding site" evidence="1">
    <location>
        <position position="137"/>
    </location>
    <ligand>
        <name>NAD(+)</name>
        <dbReference type="ChEBI" id="CHEBI:57540"/>
    </ligand>
</feature>
<feature type="binding site" evidence="1">
    <location>
        <position position="171"/>
    </location>
    <ligand>
        <name>NAD(+)</name>
        <dbReference type="ChEBI" id="CHEBI:57540"/>
    </ligand>
</feature>
<feature type="binding site" evidence="1">
    <location>
        <position position="287"/>
    </location>
    <ligand>
        <name>NAD(+)</name>
        <dbReference type="ChEBI" id="CHEBI:57540"/>
    </ligand>
</feature>
<feature type="binding site" evidence="1">
    <location>
        <position position="311"/>
    </location>
    <ligand>
        <name>NAD(+)</name>
        <dbReference type="ChEBI" id="CHEBI:57540"/>
    </ligand>
</feature>
<feature type="binding site" evidence="1">
    <location>
        <position position="405"/>
    </location>
    <ligand>
        <name>Zn(2+)</name>
        <dbReference type="ChEBI" id="CHEBI:29105"/>
    </ligand>
</feature>
<feature type="binding site" evidence="1">
    <location>
        <position position="408"/>
    </location>
    <ligand>
        <name>Zn(2+)</name>
        <dbReference type="ChEBI" id="CHEBI:29105"/>
    </ligand>
</feature>
<feature type="binding site" evidence="1">
    <location>
        <position position="423"/>
    </location>
    <ligand>
        <name>Zn(2+)</name>
        <dbReference type="ChEBI" id="CHEBI:29105"/>
    </ligand>
</feature>
<feature type="binding site" evidence="1">
    <location>
        <position position="428"/>
    </location>
    <ligand>
        <name>Zn(2+)</name>
        <dbReference type="ChEBI" id="CHEBI:29105"/>
    </ligand>
</feature>
<name>DNLJ_BACCN</name>
<reference key="1">
    <citation type="journal article" date="2008" name="Chem. Biol. Interact.">
        <title>Extending the Bacillus cereus group genomics to putative food-borne pathogens of different toxicity.</title>
        <authorList>
            <person name="Lapidus A."/>
            <person name="Goltsman E."/>
            <person name="Auger S."/>
            <person name="Galleron N."/>
            <person name="Segurens B."/>
            <person name="Dossat C."/>
            <person name="Land M.L."/>
            <person name="Broussolle V."/>
            <person name="Brillard J."/>
            <person name="Guinebretiere M.-H."/>
            <person name="Sanchis V."/>
            <person name="Nguen-the C."/>
            <person name="Lereclus D."/>
            <person name="Richardson P."/>
            <person name="Wincker P."/>
            <person name="Weissenbach J."/>
            <person name="Ehrlich S.D."/>
            <person name="Sorokin A."/>
        </authorList>
    </citation>
    <scope>NUCLEOTIDE SEQUENCE [LARGE SCALE GENOMIC DNA]</scope>
    <source>
        <strain>DSM 22905 / CIP 110041 / 391-98 / NVH 391-98</strain>
    </source>
</reference>
<keyword id="KW-0227">DNA damage</keyword>
<keyword id="KW-0234">DNA repair</keyword>
<keyword id="KW-0235">DNA replication</keyword>
<keyword id="KW-0436">Ligase</keyword>
<keyword id="KW-0460">Magnesium</keyword>
<keyword id="KW-0464">Manganese</keyword>
<keyword id="KW-0479">Metal-binding</keyword>
<keyword id="KW-0520">NAD</keyword>
<keyword id="KW-0862">Zinc</keyword>
<organism>
    <name type="scientific">Bacillus cytotoxicus (strain DSM 22905 / CIP 110041 / 391-98 / NVH 391-98)</name>
    <dbReference type="NCBI Taxonomy" id="315749"/>
    <lineage>
        <taxon>Bacteria</taxon>
        <taxon>Bacillati</taxon>
        <taxon>Bacillota</taxon>
        <taxon>Bacilli</taxon>
        <taxon>Bacillales</taxon>
        <taxon>Bacillaceae</taxon>
        <taxon>Bacillus</taxon>
        <taxon>Bacillus cereus group</taxon>
    </lineage>
</organism>
<accession>A7GKJ1</accession>
<sequence>MSKEAVQQRIEELRDLLNTFNYQYHVLDNPSVSDAEYDRNMQELIKLETENPEFITEDSPSVRVGGAVLDIFEKVTHKSPMLSLGNAFNEGDLRDFDRRVRQGIDGVNVRYICELKIDGLAVSLHYEKGRFIQGSTRGDGITGEDITQNLKTIKAIPLRLQEEVTLEVRGEAYMPKRSFVKLNEEKEQNGEAVFANPRNAAAGSLRQLDPKIAAKRNLSMFVYGLADIEGKTITSHSEALDFLGELGFKTNPNRRICETIEEVIAYVEEWQEKRPNLDYEIDGIVIKVDDVTLQERLGTTAKSPRWAIAYKFPAEEVVTRLTGIELSVGRTGVVTPTAELEPVRVAGTIVRRASLHNEDLIREKDIRIGDYVVVKKAGDIIPEVVNVVFDKRTGKEEAYHMPTHCPTCDSGLVRLEEEVALRCINPACPAQIREGLIHFVSRNAMNIDGLGERVITQLFEANYIRTFADLYGLTKDQLLQLDRFGEKSASNLVQAIEASKENSLERLLFGLGIRHVGAKAARTLAEHFETMDNLVKAGEEELKAINEIGEKMAQSIVTYFDNEDVLHLIQQFKDYGVNMTYKGIKRADLQNIASYFAGKTVVLTGKLEVMGRSEAKKKIEALGGKVTGSVSKSTDLVIAGEAAGSKLAQAEKHNIEIWNEERFLQELNK</sequence>
<protein>
    <recommendedName>
        <fullName evidence="1">DNA ligase</fullName>
        <ecNumber evidence="1">6.5.1.2</ecNumber>
    </recommendedName>
    <alternativeName>
        <fullName evidence="1">Polydeoxyribonucleotide synthase [NAD(+)]</fullName>
    </alternativeName>
</protein>
<evidence type="ECO:0000255" key="1">
    <source>
        <dbReference type="HAMAP-Rule" id="MF_01588"/>
    </source>
</evidence>
<proteinExistence type="inferred from homology"/>
<gene>
    <name evidence="1" type="primary">ligA</name>
    <name type="ordered locus">Bcer98_0286</name>
</gene>
<dbReference type="EC" id="6.5.1.2" evidence="1"/>
<dbReference type="EMBL" id="CP000764">
    <property type="protein sequence ID" value="ABS20649.1"/>
    <property type="molecule type" value="Genomic_DNA"/>
</dbReference>
<dbReference type="RefSeq" id="WP_011983408.1">
    <property type="nucleotide sequence ID" value="NC_009674.1"/>
</dbReference>
<dbReference type="SMR" id="A7GKJ1"/>
<dbReference type="STRING" id="315749.Bcer98_0286"/>
<dbReference type="GeneID" id="33895640"/>
<dbReference type="KEGG" id="bcy:Bcer98_0286"/>
<dbReference type="eggNOG" id="COG0272">
    <property type="taxonomic scope" value="Bacteria"/>
</dbReference>
<dbReference type="HOGENOM" id="CLU_007764_2_1_9"/>
<dbReference type="OrthoDB" id="9759736at2"/>
<dbReference type="Proteomes" id="UP000002300">
    <property type="component" value="Chromosome"/>
</dbReference>
<dbReference type="GO" id="GO:0005829">
    <property type="term" value="C:cytosol"/>
    <property type="evidence" value="ECO:0007669"/>
    <property type="project" value="TreeGrafter"/>
</dbReference>
<dbReference type="GO" id="GO:0003677">
    <property type="term" value="F:DNA binding"/>
    <property type="evidence" value="ECO:0007669"/>
    <property type="project" value="InterPro"/>
</dbReference>
<dbReference type="GO" id="GO:0003911">
    <property type="term" value="F:DNA ligase (NAD+) activity"/>
    <property type="evidence" value="ECO:0007669"/>
    <property type="project" value="UniProtKB-UniRule"/>
</dbReference>
<dbReference type="GO" id="GO:0046872">
    <property type="term" value="F:metal ion binding"/>
    <property type="evidence" value="ECO:0007669"/>
    <property type="project" value="UniProtKB-KW"/>
</dbReference>
<dbReference type="GO" id="GO:0006281">
    <property type="term" value="P:DNA repair"/>
    <property type="evidence" value="ECO:0007669"/>
    <property type="project" value="UniProtKB-KW"/>
</dbReference>
<dbReference type="GO" id="GO:0006260">
    <property type="term" value="P:DNA replication"/>
    <property type="evidence" value="ECO:0007669"/>
    <property type="project" value="UniProtKB-KW"/>
</dbReference>
<dbReference type="CDD" id="cd17748">
    <property type="entry name" value="BRCT_DNA_ligase_like"/>
    <property type="match status" value="1"/>
</dbReference>
<dbReference type="CDD" id="cd00114">
    <property type="entry name" value="LIGANc"/>
    <property type="match status" value="1"/>
</dbReference>
<dbReference type="FunFam" id="1.10.150.20:FF:000006">
    <property type="entry name" value="DNA ligase"/>
    <property type="match status" value="1"/>
</dbReference>
<dbReference type="FunFam" id="1.10.150.20:FF:000007">
    <property type="entry name" value="DNA ligase"/>
    <property type="match status" value="1"/>
</dbReference>
<dbReference type="FunFam" id="1.10.287.610:FF:000002">
    <property type="entry name" value="DNA ligase"/>
    <property type="match status" value="1"/>
</dbReference>
<dbReference type="FunFam" id="2.40.50.140:FF:000012">
    <property type="entry name" value="DNA ligase"/>
    <property type="match status" value="1"/>
</dbReference>
<dbReference type="FunFam" id="3.30.470.30:FF:000001">
    <property type="entry name" value="DNA ligase"/>
    <property type="match status" value="1"/>
</dbReference>
<dbReference type="FunFam" id="3.40.50.10190:FF:000026">
    <property type="entry name" value="DNA ligase"/>
    <property type="match status" value="1"/>
</dbReference>
<dbReference type="FunFam" id="6.20.10.30:FF:000002">
    <property type="entry name" value="DNA ligase"/>
    <property type="match status" value="1"/>
</dbReference>
<dbReference type="Gene3D" id="6.20.10.30">
    <property type="match status" value="1"/>
</dbReference>
<dbReference type="Gene3D" id="1.10.150.20">
    <property type="entry name" value="5' to 3' exonuclease, C-terminal subdomain"/>
    <property type="match status" value="2"/>
</dbReference>
<dbReference type="Gene3D" id="3.40.50.10190">
    <property type="entry name" value="BRCT domain"/>
    <property type="match status" value="1"/>
</dbReference>
<dbReference type="Gene3D" id="3.30.470.30">
    <property type="entry name" value="DNA ligase/mRNA capping enzyme"/>
    <property type="match status" value="1"/>
</dbReference>
<dbReference type="Gene3D" id="1.10.287.610">
    <property type="entry name" value="Helix hairpin bin"/>
    <property type="match status" value="1"/>
</dbReference>
<dbReference type="Gene3D" id="2.40.50.140">
    <property type="entry name" value="Nucleic acid-binding proteins"/>
    <property type="match status" value="1"/>
</dbReference>
<dbReference type="HAMAP" id="MF_01588">
    <property type="entry name" value="DNA_ligase_A"/>
    <property type="match status" value="1"/>
</dbReference>
<dbReference type="InterPro" id="IPR001357">
    <property type="entry name" value="BRCT_dom"/>
</dbReference>
<dbReference type="InterPro" id="IPR036420">
    <property type="entry name" value="BRCT_dom_sf"/>
</dbReference>
<dbReference type="InterPro" id="IPR041663">
    <property type="entry name" value="DisA/LigA_HHH"/>
</dbReference>
<dbReference type="InterPro" id="IPR001679">
    <property type="entry name" value="DNA_ligase"/>
</dbReference>
<dbReference type="InterPro" id="IPR018239">
    <property type="entry name" value="DNA_ligase_AS"/>
</dbReference>
<dbReference type="InterPro" id="IPR033136">
    <property type="entry name" value="DNA_ligase_CS"/>
</dbReference>
<dbReference type="InterPro" id="IPR013839">
    <property type="entry name" value="DNAligase_adenylation"/>
</dbReference>
<dbReference type="InterPro" id="IPR013840">
    <property type="entry name" value="DNAligase_N"/>
</dbReference>
<dbReference type="InterPro" id="IPR003583">
    <property type="entry name" value="Hlx-hairpin-Hlx_DNA-bd_motif"/>
</dbReference>
<dbReference type="InterPro" id="IPR012340">
    <property type="entry name" value="NA-bd_OB-fold"/>
</dbReference>
<dbReference type="InterPro" id="IPR004150">
    <property type="entry name" value="NAD_DNA_ligase_OB"/>
</dbReference>
<dbReference type="InterPro" id="IPR010994">
    <property type="entry name" value="RuvA_2-like"/>
</dbReference>
<dbReference type="InterPro" id="IPR004149">
    <property type="entry name" value="Znf_DNAligase_C4"/>
</dbReference>
<dbReference type="NCBIfam" id="TIGR00575">
    <property type="entry name" value="dnlj"/>
    <property type="match status" value="1"/>
</dbReference>
<dbReference type="NCBIfam" id="NF005932">
    <property type="entry name" value="PRK07956.1"/>
    <property type="match status" value="1"/>
</dbReference>
<dbReference type="PANTHER" id="PTHR23389">
    <property type="entry name" value="CHROMOSOME TRANSMISSION FIDELITY FACTOR 18"/>
    <property type="match status" value="1"/>
</dbReference>
<dbReference type="PANTHER" id="PTHR23389:SF9">
    <property type="entry name" value="DNA LIGASE"/>
    <property type="match status" value="1"/>
</dbReference>
<dbReference type="Pfam" id="PF00533">
    <property type="entry name" value="BRCT"/>
    <property type="match status" value="1"/>
</dbReference>
<dbReference type="Pfam" id="PF01653">
    <property type="entry name" value="DNA_ligase_aden"/>
    <property type="match status" value="1"/>
</dbReference>
<dbReference type="Pfam" id="PF03120">
    <property type="entry name" value="DNA_ligase_OB"/>
    <property type="match status" value="1"/>
</dbReference>
<dbReference type="Pfam" id="PF03119">
    <property type="entry name" value="DNA_ligase_ZBD"/>
    <property type="match status" value="1"/>
</dbReference>
<dbReference type="Pfam" id="PF12826">
    <property type="entry name" value="HHH_2"/>
    <property type="match status" value="1"/>
</dbReference>
<dbReference type="Pfam" id="PF14520">
    <property type="entry name" value="HHH_5"/>
    <property type="match status" value="1"/>
</dbReference>
<dbReference type="Pfam" id="PF22745">
    <property type="entry name" value="Nlig-Ia"/>
    <property type="match status" value="1"/>
</dbReference>
<dbReference type="PIRSF" id="PIRSF001604">
    <property type="entry name" value="LigA"/>
    <property type="match status" value="1"/>
</dbReference>
<dbReference type="SMART" id="SM00292">
    <property type="entry name" value="BRCT"/>
    <property type="match status" value="1"/>
</dbReference>
<dbReference type="SMART" id="SM00278">
    <property type="entry name" value="HhH1"/>
    <property type="match status" value="3"/>
</dbReference>
<dbReference type="SMART" id="SM00532">
    <property type="entry name" value="LIGANc"/>
    <property type="match status" value="1"/>
</dbReference>
<dbReference type="SUPFAM" id="SSF52113">
    <property type="entry name" value="BRCT domain"/>
    <property type="match status" value="1"/>
</dbReference>
<dbReference type="SUPFAM" id="SSF56091">
    <property type="entry name" value="DNA ligase/mRNA capping enzyme, catalytic domain"/>
    <property type="match status" value="1"/>
</dbReference>
<dbReference type="SUPFAM" id="SSF50249">
    <property type="entry name" value="Nucleic acid-binding proteins"/>
    <property type="match status" value="1"/>
</dbReference>
<dbReference type="SUPFAM" id="SSF47781">
    <property type="entry name" value="RuvA domain 2-like"/>
    <property type="match status" value="1"/>
</dbReference>
<dbReference type="PROSITE" id="PS50172">
    <property type="entry name" value="BRCT"/>
    <property type="match status" value="1"/>
</dbReference>
<dbReference type="PROSITE" id="PS01055">
    <property type="entry name" value="DNA_LIGASE_N1"/>
    <property type="match status" value="1"/>
</dbReference>
<dbReference type="PROSITE" id="PS01056">
    <property type="entry name" value="DNA_LIGASE_N2"/>
    <property type="match status" value="1"/>
</dbReference>
<comment type="function">
    <text evidence="1">DNA ligase that catalyzes the formation of phosphodiester linkages between 5'-phosphoryl and 3'-hydroxyl groups in double-stranded DNA using NAD as a coenzyme and as the energy source for the reaction. It is essential for DNA replication and repair of damaged DNA.</text>
</comment>
<comment type="catalytic activity">
    <reaction evidence="1">
        <text>NAD(+) + (deoxyribonucleotide)n-3'-hydroxyl + 5'-phospho-(deoxyribonucleotide)m = (deoxyribonucleotide)n+m + AMP + beta-nicotinamide D-nucleotide.</text>
        <dbReference type="EC" id="6.5.1.2"/>
    </reaction>
</comment>
<comment type="cofactor">
    <cofactor evidence="1">
        <name>Mg(2+)</name>
        <dbReference type="ChEBI" id="CHEBI:18420"/>
    </cofactor>
    <cofactor evidence="1">
        <name>Mn(2+)</name>
        <dbReference type="ChEBI" id="CHEBI:29035"/>
    </cofactor>
</comment>
<comment type="similarity">
    <text evidence="1">Belongs to the NAD-dependent DNA ligase family. LigA subfamily.</text>
</comment>